<protein>
    <recommendedName>
        <fullName evidence="1">Uncharacterized methyltransferase BALH_3960</fullName>
        <ecNumber evidence="1">2.1.1.-</ecNumber>
    </recommendedName>
</protein>
<evidence type="ECO:0000255" key="1">
    <source>
        <dbReference type="HAMAP-Rule" id="MF_02100"/>
    </source>
</evidence>
<evidence type="ECO:0000305" key="2"/>
<feature type="chain" id="PRO_0000373849" description="Uncharacterized methyltransferase BALH_3960">
    <location>
        <begin position="1"/>
        <end position="212"/>
    </location>
</feature>
<feature type="binding site" evidence="1">
    <location>
        <position position="53"/>
    </location>
    <ligand>
        <name>S-adenosyl-L-methionine</name>
        <dbReference type="ChEBI" id="CHEBI:59789"/>
    </ligand>
</feature>
<feature type="binding site" evidence="1">
    <location>
        <position position="74"/>
    </location>
    <ligand>
        <name>S-adenosyl-L-methionine</name>
        <dbReference type="ChEBI" id="CHEBI:59789"/>
    </ligand>
</feature>
<feature type="binding site" evidence="1">
    <location>
        <position position="97"/>
    </location>
    <ligand>
        <name>S-adenosyl-L-methionine</name>
        <dbReference type="ChEBI" id="CHEBI:59789"/>
    </ligand>
</feature>
<keyword id="KW-0489">Methyltransferase</keyword>
<keyword id="KW-0949">S-adenosyl-L-methionine</keyword>
<keyword id="KW-0808">Transferase</keyword>
<proteinExistence type="inferred from homology"/>
<sequence>MGTEFNGLFDEWAHTYDSFVQGEDIQYKEVFAHYEDILEDVVNKSFGHVLEFGVGTGNLTNKLLLAGRTVYGIEPSREMRMIAKEKLPKEFSITEGDFLSFEVPNSIDTIVSTYAFHHLTDDEKNVAIAKYSQLLNKGGKIVFADTIFADQDAYDKTVEAAKQRGFHQLANDLQTEYYTRIPVMQTIFENNGFHVTFTRLNHFVWVMEATKQ</sequence>
<comment type="function">
    <text evidence="1">Could be a S-adenosyl-L-methionine-dependent methyltransferase.</text>
</comment>
<comment type="similarity">
    <text evidence="1">Belongs to the methyltransferase superfamily. YrrT family.</text>
</comment>
<comment type="sequence caution" evidence="2">
    <conflict type="erroneous initiation">
        <sequence resource="EMBL-CDS" id="ABK87181"/>
    </conflict>
</comment>
<reference key="1">
    <citation type="journal article" date="2007" name="J. Bacteriol.">
        <title>The complete genome sequence of Bacillus thuringiensis Al Hakam.</title>
        <authorList>
            <person name="Challacombe J.F."/>
            <person name="Altherr M.R."/>
            <person name="Xie G."/>
            <person name="Bhotika S.S."/>
            <person name="Brown N."/>
            <person name="Bruce D."/>
            <person name="Campbell C.S."/>
            <person name="Campbell M.L."/>
            <person name="Chen J."/>
            <person name="Chertkov O."/>
            <person name="Cleland C."/>
            <person name="Dimitrijevic M."/>
            <person name="Doggett N.A."/>
            <person name="Fawcett J.J."/>
            <person name="Glavina T."/>
            <person name="Goodwin L.A."/>
            <person name="Green L.D."/>
            <person name="Han C.S."/>
            <person name="Hill K.K."/>
            <person name="Hitchcock P."/>
            <person name="Jackson P.J."/>
            <person name="Keim P."/>
            <person name="Kewalramani A.R."/>
            <person name="Longmire J."/>
            <person name="Lucas S."/>
            <person name="Malfatti S."/>
            <person name="Martinez D."/>
            <person name="McMurry K."/>
            <person name="Meincke L.J."/>
            <person name="Misra M."/>
            <person name="Moseman B.L."/>
            <person name="Mundt M."/>
            <person name="Munk A.C."/>
            <person name="Okinaka R.T."/>
            <person name="Parson-Quintana B."/>
            <person name="Reilly L.P."/>
            <person name="Richardson P."/>
            <person name="Robinson D.L."/>
            <person name="Saunders E."/>
            <person name="Tapia R."/>
            <person name="Tesmer J.G."/>
            <person name="Thayer N."/>
            <person name="Thompson L.S."/>
            <person name="Tice H."/>
            <person name="Ticknor L.O."/>
            <person name="Wills P.L."/>
            <person name="Gilna P."/>
            <person name="Brettin T.S."/>
        </authorList>
    </citation>
    <scope>NUCLEOTIDE SEQUENCE [LARGE SCALE GENOMIC DNA]</scope>
    <source>
        <strain>Al Hakam</strain>
    </source>
</reference>
<gene>
    <name type="ordered locus">BALH_3960</name>
</gene>
<name>Y3960_BACAH</name>
<organism>
    <name type="scientific">Bacillus thuringiensis (strain Al Hakam)</name>
    <dbReference type="NCBI Taxonomy" id="412694"/>
    <lineage>
        <taxon>Bacteria</taxon>
        <taxon>Bacillati</taxon>
        <taxon>Bacillota</taxon>
        <taxon>Bacilli</taxon>
        <taxon>Bacillales</taxon>
        <taxon>Bacillaceae</taxon>
        <taxon>Bacillus</taxon>
        <taxon>Bacillus cereus group</taxon>
    </lineage>
</organism>
<accession>A0RIY8</accession>
<dbReference type="EC" id="2.1.1.-" evidence="1"/>
<dbReference type="EMBL" id="CP000485">
    <property type="protein sequence ID" value="ABK87181.1"/>
    <property type="status" value="ALT_INIT"/>
    <property type="molecule type" value="Genomic_DNA"/>
</dbReference>
<dbReference type="RefSeq" id="WP_000536311.1">
    <property type="nucleotide sequence ID" value="NC_008600.1"/>
</dbReference>
<dbReference type="SMR" id="A0RIY8"/>
<dbReference type="KEGG" id="btl:BALH_3960"/>
<dbReference type="HOGENOM" id="CLU_111961_0_0_9"/>
<dbReference type="GO" id="GO:0008757">
    <property type="term" value="F:S-adenosylmethionine-dependent methyltransferase activity"/>
    <property type="evidence" value="ECO:0007669"/>
    <property type="project" value="UniProtKB-UniRule"/>
</dbReference>
<dbReference type="GO" id="GO:0032259">
    <property type="term" value="P:methylation"/>
    <property type="evidence" value="ECO:0007669"/>
    <property type="project" value="UniProtKB-KW"/>
</dbReference>
<dbReference type="CDD" id="cd02440">
    <property type="entry name" value="AdoMet_MTases"/>
    <property type="match status" value="1"/>
</dbReference>
<dbReference type="Gene3D" id="3.40.50.150">
    <property type="entry name" value="Vaccinia Virus protein VP39"/>
    <property type="match status" value="1"/>
</dbReference>
<dbReference type="HAMAP" id="MF_02100">
    <property type="entry name" value="Methyltr_YrrT"/>
    <property type="match status" value="1"/>
</dbReference>
<dbReference type="InterPro" id="IPR041698">
    <property type="entry name" value="Methyltransf_25"/>
</dbReference>
<dbReference type="InterPro" id="IPR029063">
    <property type="entry name" value="SAM-dependent_MTases_sf"/>
</dbReference>
<dbReference type="InterPro" id="IPR023553">
    <property type="entry name" value="Uncharacterised_MeTfrase_YrrT"/>
</dbReference>
<dbReference type="PANTHER" id="PTHR43861:SF1">
    <property type="entry name" value="TRANS-ACONITATE 2-METHYLTRANSFERASE"/>
    <property type="match status" value="1"/>
</dbReference>
<dbReference type="PANTHER" id="PTHR43861">
    <property type="entry name" value="TRANS-ACONITATE 2-METHYLTRANSFERASE-RELATED"/>
    <property type="match status" value="1"/>
</dbReference>
<dbReference type="Pfam" id="PF13649">
    <property type="entry name" value="Methyltransf_25"/>
    <property type="match status" value="1"/>
</dbReference>
<dbReference type="SUPFAM" id="SSF53335">
    <property type="entry name" value="S-adenosyl-L-methionine-dependent methyltransferases"/>
    <property type="match status" value="1"/>
</dbReference>